<accession>P0A4N9</accession>
<accession>Q07743</accession>
<name>OPPC_LACLA</name>
<sequence>MTEKKHKNSLSLVHSIKEELKKDKLAMISTIFLVAVFLIVYIYSMFLKQSNYVDVNIMDQYLAPLTNGHLLGTDNGGRDIIMMLMISARNSFNIAFAVTLITLVVGNILGVITGYFGGRFDLIFMRFTDFVMILPSMMIIIVFVTIIPRFNSWSLIGIISIFSWIGTTRLIRARTMTEVNRDYVRASKTSGTSDFKIMFREIWPNLSTLVIAEATLVFAGNIGLETGLSFLGFGLPAGTPSLGTMINEATNPETMTDKPWTWVPATVVILIVVLAIIFIGNALRRVADQRQATR</sequence>
<protein>
    <recommendedName>
        <fullName evidence="5">Oligopeptide transport system permease protein OppC</fullName>
    </recommendedName>
</protein>
<keyword id="KW-1003">Cell membrane</keyword>
<keyword id="KW-0472">Membrane</keyword>
<keyword id="KW-0571">Peptide transport</keyword>
<keyword id="KW-0653">Protein transport</keyword>
<keyword id="KW-1185">Reference proteome</keyword>
<keyword id="KW-0812">Transmembrane</keyword>
<keyword id="KW-1133">Transmembrane helix</keyword>
<keyword id="KW-0813">Transport</keyword>
<dbReference type="EMBL" id="L18760">
    <property type="protein sequence ID" value="AAA16166.1"/>
    <property type="molecule type" value="Unassigned_DNA"/>
</dbReference>
<dbReference type="EMBL" id="AE005176">
    <property type="protein sequence ID" value="AAK05936.1"/>
    <property type="molecule type" value="Genomic_DNA"/>
</dbReference>
<dbReference type="PIR" id="D53290">
    <property type="entry name" value="D53290"/>
</dbReference>
<dbReference type="RefSeq" id="NP_267995.1">
    <property type="nucleotide sequence ID" value="NC_002662.1"/>
</dbReference>
<dbReference type="RefSeq" id="WP_003140250.1">
    <property type="nucleotide sequence ID" value="NC_002662.1"/>
</dbReference>
<dbReference type="RefSeq" id="YP_001174732.1">
    <property type="nucleotide sequence ID" value="NC_009435.1"/>
</dbReference>
<dbReference type="SMR" id="P0A4N9"/>
<dbReference type="TCDB" id="3.A.1.5.10">
    <property type="family name" value="the atp-binding cassette (abc) superfamily"/>
</dbReference>
<dbReference type="PaxDb" id="272623-L90358"/>
<dbReference type="EnsemblBacteria" id="AAK05936">
    <property type="protein sequence ID" value="AAK05936"/>
    <property type="gene ID" value="L90358"/>
</dbReference>
<dbReference type="KEGG" id="lla:L90358"/>
<dbReference type="PATRIC" id="fig|272623.7.peg.1969"/>
<dbReference type="eggNOG" id="COG1173">
    <property type="taxonomic scope" value="Bacteria"/>
</dbReference>
<dbReference type="HOGENOM" id="CLU_028518_1_4_9"/>
<dbReference type="OrthoDB" id="9797472at2"/>
<dbReference type="PRO" id="PR:P0A4N9"/>
<dbReference type="Proteomes" id="UP000002196">
    <property type="component" value="Chromosome"/>
</dbReference>
<dbReference type="GO" id="GO:0005886">
    <property type="term" value="C:plasma membrane"/>
    <property type="evidence" value="ECO:0007669"/>
    <property type="project" value="UniProtKB-SubCell"/>
</dbReference>
<dbReference type="GO" id="GO:0015833">
    <property type="term" value="P:peptide transport"/>
    <property type="evidence" value="ECO:0007669"/>
    <property type="project" value="UniProtKB-KW"/>
</dbReference>
<dbReference type="GO" id="GO:0015031">
    <property type="term" value="P:protein transport"/>
    <property type="evidence" value="ECO:0007669"/>
    <property type="project" value="UniProtKB-KW"/>
</dbReference>
<dbReference type="GO" id="GO:0055085">
    <property type="term" value="P:transmembrane transport"/>
    <property type="evidence" value="ECO:0007669"/>
    <property type="project" value="InterPro"/>
</dbReference>
<dbReference type="CDD" id="cd06261">
    <property type="entry name" value="TM_PBP2"/>
    <property type="match status" value="1"/>
</dbReference>
<dbReference type="Gene3D" id="1.10.3720.10">
    <property type="entry name" value="MetI-like"/>
    <property type="match status" value="1"/>
</dbReference>
<dbReference type="InterPro" id="IPR050366">
    <property type="entry name" value="BP-dependent_transpt_permease"/>
</dbReference>
<dbReference type="InterPro" id="IPR000515">
    <property type="entry name" value="MetI-like"/>
</dbReference>
<dbReference type="InterPro" id="IPR035906">
    <property type="entry name" value="MetI-like_sf"/>
</dbReference>
<dbReference type="PANTHER" id="PTHR43386:SF1">
    <property type="entry name" value="D,D-DIPEPTIDE TRANSPORT SYSTEM PERMEASE PROTEIN DDPC-RELATED"/>
    <property type="match status" value="1"/>
</dbReference>
<dbReference type="PANTHER" id="PTHR43386">
    <property type="entry name" value="OLIGOPEPTIDE TRANSPORT SYSTEM PERMEASE PROTEIN APPC"/>
    <property type="match status" value="1"/>
</dbReference>
<dbReference type="Pfam" id="PF00528">
    <property type="entry name" value="BPD_transp_1"/>
    <property type="match status" value="1"/>
</dbReference>
<dbReference type="SUPFAM" id="SSF161098">
    <property type="entry name" value="MetI-like"/>
    <property type="match status" value="1"/>
</dbReference>
<dbReference type="PROSITE" id="PS50928">
    <property type="entry name" value="ABC_TM1"/>
    <property type="match status" value="1"/>
</dbReference>
<proteinExistence type="evidence at protein level"/>
<comment type="function">
    <text evidence="4 5">Part of the ABC transporter complex OppABCDF involved in the uptake of oligopeptides (PubMed:8244921). Probably responsible for the translocation of the substrate across the membrane (Probable). Essential for uptake of peptides larger than three amino acids and for growth in milk (PubMed:8244921).</text>
</comment>
<comment type="subunit">
    <text evidence="6">The complex is composed of two ATP-binding proteins (OppD and OppF), two transmembrane proteins (OppB and OppC) and a solute-binding protein (OppA).</text>
</comment>
<comment type="subcellular location">
    <subcellularLocation>
        <location evidence="1">Cell membrane</location>
        <topology evidence="2">Multi-pass membrane protein</topology>
    </subcellularLocation>
</comment>
<comment type="similarity">
    <text evidence="5">Belongs to the binding-protein-dependent transport system permease family. OppBC subfamily.</text>
</comment>
<evidence type="ECO:0000250" key="1">
    <source>
        <dbReference type="UniProtKB" id="P24139"/>
    </source>
</evidence>
<evidence type="ECO:0000255" key="2"/>
<evidence type="ECO:0000255" key="3">
    <source>
        <dbReference type="PROSITE-ProRule" id="PRU00441"/>
    </source>
</evidence>
<evidence type="ECO:0000269" key="4">
    <source>
    </source>
</evidence>
<evidence type="ECO:0000305" key="5"/>
<evidence type="ECO:0000305" key="6">
    <source>
    </source>
</evidence>
<organism>
    <name type="scientific">Lactococcus lactis subsp. lactis (strain IL1403)</name>
    <name type="common">Streptococcus lactis</name>
    <dbReference type="NCBI Taxonomy" id="272623"/>
    <lineage>
        <taxon>Bacteria</taxon>
        <taxon>Bacillati</taxon>
        <taxon>Bacillota</taxon>
        <taxon>Bacilli</taxon>
        <taxon>Lactobacillales</taxon>
        <taxon>Streptococcaceae</taxon>
        <taxon>Lactococcus</taxon>
    </lineage>
</organism>
<feature type="chain" id="PRO_0000060137" description="Oligopeptide transport system permease protein OppC">
    <location>
        <begin position="1"/>
        <end position="294"/>
    </location>
</feature>
<feature type="transmembrane region" description="Helical" evidence="3">
    <location>
        <begin position="27"/>
        <end position="47"/>
    </location>
</feature>
<feature type="transmembrane region" description="Helical" evidence="3">
    <location>
        <begin position="94"/>
        <end position="114"/>
    </location>
</feature>
<feature type="transmembrane region" description="Helical" evidence="3">
    <location>
        <begin position="127"/>
        <end position="147"/>
    </location>
</feature>
<feature type="transmembrane region" description="Helical" evidence="3">
    <location>
        <begin position="151"/>
        <end position="171"/>
    </location>
</feature>
<feature type="transmembrane region" description="Helical" evidence="3">
    <location>
        <begin position="202"/>
        <end position="224"/>
    </location>
</feature>
<feature type="transmembrane region" description="Helical" evidence="3">
    <location>
        <begin position="260"/>
        <end position="280"/>
    </location>
</feature>
<feature type="domain" description="ABC transmembrane type-1" evidence="3">
    <location>
        <begin position="88"/>
        <end position="280"/>
    </location>
</feature>
<reference key="1">
    <citation type="journal article" date="1993" name="J. Bacteriol.">
        <title>Genetic and biochemical characterization of the oligopeptide transport system of Lactococcus lactis.</title>
        <authorList>
            <person name="Tynkkynen S."/>
            <person name="Buist G."/>
            <person name="Kunji E."/>
            <person name="Kok J."/>
            <person name="Poolman B."/>
            <person name="Venema G."/>
            <person name="Haandrikman A."/>
        </authorList>
    </citation>
    <scope>NUCLEOTIDE SEQUENCE [GENOMIC DNA]</scope>
    <scope>FUNCTION</scope>
    <scope>SUBUNIT</scope>
    <source>
        <strain>SSL135</strain>
    </source>
</reference>
<reference key="2">
    <citation type="journal article" date="2001" name="Genome Res.">
        <title>The complete genome sequence of the lactic acid bacterium Lactococcus lactis ssp. lactis IL1403.</title>
        <authorList>
            <person name="Bolotin A."/>
            <person name="Wincker P."/>
            <person name="Mauger S."/>
            <person name="Jaillon O."/>
            <person name="Malarme K."/>
            <person name="Weissenbach J."/>
            <person name="Ehrlich S.D."/>
            <person name="Sorokin A."/>
        </authorList>
    </citation>
    <scope>NUCLEOTIDE SEQUENCE [LARGE SCALE GENOMIC DNA]</scope>
    <source>
        <strain>IL1403</strain>
    </source>
</reference>
<gene>
    <name type="primary">oppC</name>
    <name type="ordered locus">LL1838</name>
    <name type="ORF">L90358</name>
</gene>